<proteinExistence type="inferred from homology"/>
<feature type="chain" id="PRO_0000386951" description="Ribosomal RNA small subunit methyltransferase H">
    <location>
        <begin position="1"/>
        <end position="317"/>
    </location>
</feature>
<feature type="binding site" evidence="1">
    <location>
        <begin position="37"/>
        <end position="39"/>
    </location>
    <ligand>
        <name>S-adenosyl-L-methionine</name>
        <dbReference type="ChEBI" id="CHEBI:59789"/>
    </ligand>
</feature>
<feature type="binding site" evidence="1">
    <location>
        <position position="56"/>
    </location>
    <ligand>
        <name>S-adenosyl-L-methionine</name>
        <dbReference type="ChEBI" id="CHEBI:59789"/>
    </ligand>
</feature>
<feature type="binding site" evidence="1">
    <location>
        <position position="85"/>
    </location>
    <ligand>
        <name>S-adenosyl-L-methionine</name>
        <dbReference type="ChEBI" id="CHEBI:59789"/>
    </ligand>
</feature>
<feature type="binding site" evidence="1">
    <location>
        <position position="106"/>
    </location>
    <ligand>
        <name>S-adenosyl-L-methionine</name>
        <dbReference type="ChEBI" id="CHEBI:59789"/>
    </ligand>
</feature>
<feature type="binding site" evidence="1">
    <location>
        <position position="113"/>
    </location>
    <ligand>
        <name>S-adenosyl-L-methionine</name>
        <dbReference type="ChEBI" id="CHEBI:59789"/>
    </ligand>
</feature>
<reference key="1">
    <citation type="journal article" date="2006" name="Proc. Natl. Acad. Sci. U.S.A.">
        <title>Comparative genomics of the lactic acid bacteria.</title>
        <authorList>
            <person name="Makarova K.S."/>
            <person name="Slesarev A."/>
            <person name="Wolf Y.I."/>
            <person name="Sorokin A."/>
            <person name="Mirkin B."/>
            <person name="Koonin E.V."/>
            <person name="Pavlov A."/>
            <person name="Pavlova N."/>
            <person name="Karamychev V."/>
            <person name="Polouchine N."/>
            <person name="Shakhova V."/>
            <person name="Grigoriev I."/>
            <person name="Lou Y."/>
            <person name="Rohksar D."/>
            <person name="Lucas S."/>
            <person name="Huang K."/>
            <person name="Goodstein D.M."/>
            <person name="Hawkins T."/>
            <person name="Plengvidhya V."/>
            <person name="Welker D."/>
            <person name="Hughes J."/>
            <person name="Goh Y."/>
            <person name="Benson A."/>
            <person name="Baldwin K."/>
            <person name="Lee J.-H."/>
            <person name="Diaz-Muniz I."/>
            <person name="Dosti B."/>
            <person name="Smeianov V."/>
            <person name="Wechter W."/>
            <person name="Barabote R."/>
            <person name="Lorca G."/>
            <person name="Altermann E."/>
            <person name="Barrangou R."/>
            <person name="Ganesan B."/>
            <person name="Xie Y."/>
            <person name="Rawsthorne H."/>
            <person name="Tamir D."/>
            <person name="Parker C."/>
            <person name="Breidt F."/>
            <person name="Broadbent J.R."/>
            <person name="Hutkins R."/>
            <person name="O'Sullivan D."/>
            <person name="Steele J."/>
            <person name="Unlu G."/>
            <person name="Saier M.H. Jr."/>
            <person name="Klaenhammer T."/>
            <person name="Richardson P."/>
            <person name="Kozyavkin S."/>
            <person name="Weimer B.C."/>
            <person name="Mills D.A."/>
        </authorList>
    </citation>
    <scope>NUCLEOTIDE SEQUENCE [LARGE SCALE GENOMIC DNA]</scope>
    <source>
        <strain>SK11</strain>
    </source>
</reference>
<evidence type="ECO:0000255" key="1">
    <source>
        <dbReference type="HAMAP-Rule" id="MF_01007"/>
    </source>
</evidence>
<evidence type="ECO:0000305" key="2"/>
<sequence length="317" mass="36050">MPKTIAFKHDTVLLHETVDMLEVKPNGIYVDATLGGAGHSEYLLSKLTTGHLYSFDQDETAHANAKVRLSEQLAEDKVTLIKSNFRNLKSALAELDITKIDGILYDLGVSSPQFDDSQRGFSYKKEARLDMRMDQSQTLSAYEVVNDYPYEALVRIFFRYGEDKFSKQIARKIEQSRKIKPIETTIELADLIKSALPQKELKKKGHPAKRIFQAIRIEVNDELGAAEESIEQAIDLLKVDGRISVITFHSLEDRLTKSIFKEYSTVNVPKGLPMLPKEMEAKLKLINRKPVLASEEELEFNNRAHSAKLRVAQKQRD</sequence>
<name>RSMH_LACLS</name>
<keyword id="KW-0963">Cytoplasm</keyword>
<keyword id="KW-0489">Methyltransferase</keyword>
<keyword id="KW-0698">rRNA processing</keyword>
<keyword id="KW-0949">S-adenosyl-L-methionine</keyword>
<keyword id="KW-0808">Transferase</keyword>
<gene>
    <name evidence="1" type="primary">rsmH</name>
    <name type="synonym">mraW</name>
    <name type="ordered locus">LACR_0935</name>
</gene>
<organism>
    <name type="scientific">Lactococcus lactis subsp. cremoris (strain SK11)</name>
    <dbReference type="NCBI Taxonomy" id="272622"/>
    <lineage>
        <taxon>Bacteria</taxon>
        <taxon>Bacillati</taxon>
        <taxon>Bacillota</taxon>
        <taxon>Bacilli</taxon>
        <taxon>Lactobacillales</taxon>
        <taxon>Streptococcaceae</taxon>
        <taxon>Lactococcus</taxon>
        <taxon>Lactococcus cremoris subsp. cremoris</taxon>
    </lineage>
</organism>
<accession>Q02ZY9</accession>
<dbReference type="EC" id="2.1.1.199" evidence="1"/>
<dbReference type="EMBL" id="CP000425">
    <property type="protein sequence ID" value="ABJ72483.1"/>
    <property type="status" value="ALT_INIT"/>
    <property type="molecule type" value="Genomic_DNA"/>
</dbReference>
<dbReference type="RefSeq" id="WP_011835489.1">
    <property type="nucleotide sequence ID" value="NC_008527.1"/>
</dbReference>
<dbReference type="SMR" id="Q02ZY9"/>
<dbReference type="GeneID" id="61109151"/>
<dbReference type="KEGG" id="llc:LACR_0935"/>
<dbReference type="HOGENOM" id="CLU_038422_2_0_9"/>
<dbReference type="Proteomes" id="UP000000240">
    <property type="component" value="Chromosome"/>
</dbReference>
<dbReference type="GO" id="GO:0005737">
    <property type="term" value="C:cytoplasm"/>
    <property type="evidence" value="ECO:0007669"/>
    <property type="project" value="UniProtKB-SubCell"/>
</dbReference>
<dbReference type="GO" id="GO:0071424">
    <property type="term" value="F:rRNA (cytosine-N4-)-methyltransferase activity"/>
    <property type="evidence" value="ECO:0007669"/>
    <property type="project" value="UniProtKB-UniRule"/>
</dbReference>
<dbReference type="GO" id="GO:0070475">
    <property type="term" value="P:rRNA base methylation"/>
    <property type="evidence" value="ECO:0007669"/>
    <property type="project" value="UniProtKB-UniRule"/>
</dbReference>
<dbReference type="FunFam" id="1.10.150.170:FF:000001">
    <property type="entry name" value="Ribosomal RNA small subunit methyltransferase H"/>
    <property type="match status" value="1"/>
</dbReference>
<dbReference type="Gene3D" id="1.10.150.170">
    <property type="entry name" value="Putative methyltransferase TM0872, insert domain"/>
    <property type="match status" value="1"/>
</dbReference>
<dbReference type="Gene3D" id="3.40.50.150">
    <property type="entry name" value="Vaccinia Virus protein VP39"/>
    <property type="match status" value="1"/>
</dbReference>
<dbReference type="HAMAP" id="MF_01007">
    <property type="entry name" value="16SrRNA_methyltr_H"/>
    <property type="match status" value="1"/>
</dbReference>
<dbReference type="InterPro" id="IPR002903">
    <property type="entry name" value="RsmH"/>
</dbReference>
<dbReference type="InterPro" id="IPR023397">
    <property type="entry name" value="SAM-dep_MeTrfase_MraW_recog"/>
</dbReference>
<dbReference type="InterPro" id="IPR029063">
    <property type="entry name" value="SAM-dependent_MTases_sf"/>
</dbReference>
<dbReference type="NCBIfam" id="TIGR00006">
    <property type="entry name" value="16S rRNA (cytosine(1402)-N(4))-methyltransferase RsmH"/>
    <property type="match status" value="1"/>
</dbReference>
<dbReference type="PANTHER" id="PTHR11265:SF0">
    <property type="entry name" value="12S RRNA N4-METHYLCYTIDINE METHYLTRANSFERASE"/>
    <property type="match status" value="1"/>
</dbReference>
<dbReference type="PANTHER" id="PTHR11265">
    <property type="entry name" value="S-ADENOSYL-METHYLTRANSFERASE MRAW"/>
    <property type="match status" value="1"/>
</dbReference>
<dbReference type="Pfam" id="PF01795">
    <property type="entry name" value="Methyltransf_5"/>
    <property type="match status" value="1"/>
</dbReference>
<dbReference type="PIRSF" id="PIRSF004486">
    <property type="entry name" value="MraW"/>
    <property type="match status" value="1"/>
</dbReference>
<dbReference type="SUPFAM" id="SSF81799">
    <property type="entry name" value="Putative methyltransferase TM0872, insert domain"/>
    <property type="match status" value="1"/>
</dbReference>
<dbReference type="SUPFAM" id="SSF53335">
    <property type="entry name" value="S-adenosyl-L-methionine-dependent methyltransferases"/>
    <property type="match status" value="1"/>
</dbReference>
<comment type="function">
    <text evidence="1">Specifically methylates the N4 position of cytidine in position 1402 (C1402) of 16S rRNA.</text>
</comment>
<comment type="catalytic activity">
    <reaction evidence="1">
        <text>cytidine(1402) in 16S rRNA + S-adenosyl-L-methionine = N(4)-methylcytidine(1402) in 16S rRNA + S-adenosyl-L-homocysteine + H(+)</text>
        <dbReference type="Rhea" id="RHEA:42928"/>
        <dbReference type="Rhea" id="RHEA-COMP:10286"/>
        <dbReference type="Rhea" id="RHEA-COMP:10287"/>
        <dbReference type="ChEBI" id="CHEBI:15378"/>
        <dbReference type="ChEBI" id="CHEBI:57856"/>
        <dbReference type="ChEBI" id="CHEBI:59789"/>
        <dbReference type="ChEBI" id="CHEBI:74506"/>
        <dbReference type="ChEBI" id="CHEBI:82748"/>
        <dbReference type="EC" id="2.1.1.199"/>
    </reaction>
</comment>
<comment type="subcellular location">
    <subcellularLocation>
        <location evidence="1">Cytoplasm</location>
    </subcellularLocation>
</comment>
<comment type="similarity">
    <text evidence="1">Belongs to the methyltransferase superfamily. RsmH family.</text>
</comment>
<comment type="sequence caution" evidence="2">
    <conflict type="erroneous initiation">
        <sequence resource="EMBL-CDS" id="ABJ72483"/>
    </conflict>
</comment>
<protein>
    <recommendedName>
        <fullName evidence="1">Ribosomal RNA small subunit methyltransferase H</fullName>
        <ecNumber evidence="1">2.1.1.199</ecNumber>
    </recommendedName>
    <alternativeName>
        <fullName evidence="1">16S rRNA m(4)C1402 methyltransferase</fullName>
    </alternativeName>
    <alternativeName>
        <fullName evidence="1">rRNA (cytosine-N(4)-)-methyltransferase RsmH</fullName>
    </alternativeName>
</protein>